<feature type="chain" id="PRO_0000415872" description="Thiamine thiazole synthase">
    <location>
        <begin position="1"/>
        <end position="354"/>
    </location>
</feature>
<feature type="binding site" evidence="1">
    <location>
        <position position="83"/>
    </location>
    <ligand>
        <name>substrate</name>
    </ligand>
</feature>
<feature type="binding site" evidence="1">
    <location>
        <begin position="104"/>
        <end position="105"/>
    </location>
    <ligand>
        <name>substrate</name>
    </ligand>
</feature>
<feature type="binding site" evidence="1">
    <location>
        <position position="112"/>
    </location>
    <ligand>
        <name>substrate</name>
    </ligand>
</feature>
<feature type="binding site" evidence="1">
    <location>
        <position position="177"/>
    </location>
    <ligand>
        <name>substrate</name>
    </ligand>
</feature>
<feature type="binding site" evidence="1">
    <location>
        <position position="212"/>
    </location>
    <ligand>
        <name>substrate</name>
    </ligand>
</feature>
<feature type="binding site" evidence="1">
    <location>
        <position position="227"/>
    </location>
    <ligand>
        <name>substrate</name>
    </ligand>
</feature>
<feature type="binding site" evidence="1">
    <location>
        <position position="305"/>
    </location>
    <ligand>
        <name>substrate</name>
    </ligand>
</feature>
<feature type="binding site" evidence="1">
    <location>
        <begin position="315"/>
        <end position="317"/>
    </location>
    <ligand>
        <name>substrate</name>
    </ligand>
</feature>
<feature type="modified residue" description="2,3-didehydroalanine (Cys)" evidence="1">
    <location>
        <position position="210"/>
    </location>
</feature>
<evidence type="ECO:0000255" key="1">
    <source>
        <dbReference type="HAMAP-Rule" id="MF_03158"/>
    </source>
</evidence>
<accession>C4YNP4</accession>
<sequence>MTPPTMLQTAPVESFNLNPKSTQQAINLKSDAKNGKVSFADWNEFKFAPIRESTVSRAMTRRYFADLDKFAESDIVIIGAGSAGLSAAYTLGKNRPDLKIAIIEASVSPGGGCWLGGQLFSAMVLRKPAHLFLDDMGLDYEDEGDYVVVKHAALFMSTLMSKVLQFPNIKLFNATAVEDLITRKDPATNLQRIAGVVVNWAQLDHDTQSCMDPNTINCNVVLSTSGHDGPFGAFTAKRLEQLGRAPRDVTAGFTKPSITTSKLQEPEPISNFQLGGMKGLDMNKAEDAIVKGTREVVPGLVIAGMELAEVDGSNRMRPTFGAMALSGVKAAESVLNVLELRKQQNEACYGAYKG</sequence>
<comment type="function">
    <text evidence="1">Involved in biosynthesis of the thiamine precursor thiazole. Catalyzes the conversion of NAD and glycine to adenosine diphosphate 5-(2-hydroxyethyl)-4-methylthiazole-2-carboxylic acid (ADT), an adenylated thiazole intermediate. The reaction includes an iron-dependent sulfide transfer from a conserved cysteine residue of the protein to a thiazole intermediate. The enzyme can only undergo a single turnover, which suggests it is a suicide enzyme. May have additional roles in adaptation to various stress conditions and in DNA damage tolerance.</text>
</comment>
<comment type="catalytic activity">
    <reaction evidence="1">
        <text>[ADP-thiazole synthase]-L-cysteine + glycine + NAD(+) = [ADP-thiazole synthase]-dehydroalanine + ADP-5-ethyl-4-methylthiazole-2-carboxylate + nicotinamide + 3 H2O + 2 H(+)</text>
        <dbReference type="Rhea" id="RHEA:55708"/>
        <dbReference type="Rhea" id="RHEA-COMP:14264"/>
        <dbReference type="Rhea" id="RHEA-COMP:14265"/>
        <dbReference type="ChEBI" id="CHEBI:15377"/>
        <dbReference type="ChEBI" id="CHEBI:15378"/>
        <dbReference type="ChEBI" id="CHEBI:17154"/>
        <dbReference type="ChEBI" id="CHEBI:29950"/>
        <dbReference type="ChEBI" id="CHEBI:57305"/>
        <dbReference type="ChEBI" id="CHEBI:57540"/>
        <dbReference type="ChEBI" id="CHEBI:90873"/>
        <dbReference type="ChEBI" id="CHEBI:139151"/>
        <dbReference type="EC" id="2.4.2.60"/>
    </reaction>
</comment>
<comment type="cofactor">
    <cofactor evidence="1">
        <name>Fe cation</name>
        <dbReference type="ChEBI" id="CHEBI:24875"/>
    </cofactor>
    <text evidence="1">Binds 1 Fe cation per subunit.</text>
</comment>
<comment type="subunit">
    <text evidence="1">Homooctamer.</text>
</comment>
<comment type="subcellular location">
    <subcellularLocation>
        <location evidence="1">Cytoplasm</location>
    </subcellularLocation>
    <subcellularLocation>
        <location evidence="1">Nucleus</location>
    </subcellularLocation>
</comment>
<comment type="PTM">
    <text evidence="1">During the catalytic reaction, a sulfide is transferred from Cys-210 to a reaction intermediate, generating a dehydroalanine residue.</text>
</comment>
<comment type="similarity">
    <text evidence="1">Belongs to the THI4 family.</text>
</comment>
<dbReference type="EC" id="2.4.2.60" evidence="1"/>
<dbReference type="EMBL" id="CM000310">
    <property type="protein sequence ID" value="EEQ44553.1"/>
    <property type="molecule type" value="Genomic_DNA"/>
</dbReference>
<dbReference type="SMR" id="C4YNP4"/>
<dbReference type="PaxDb" id="5476-C4YNP4"/>
<dbReference type="VEuPathDB" id="FungiDB:CAWG_02825"/>
<dbReference type="HOGENOM" id="CLU_053727_0_0_1"/>
<dbReference type="OMA" id="MFPRIVV"/>
<dbReference type="OrthoDB" id="7842at766764"/>
<dbReference type="Proteomes" id="UP000001429">
    <property type="component" value="Chromosome 3"/>
</dbReference>
<dbReference type="GO" id="GO:0005829">
    <property type="term" value="C:cytosol"/>
    <property type="evidence" value="ECO:0007669"/>
    <property type="project" value="UniProtKB-UniRule"/>
</dbReference>
<dbReference type="GO" id="GO:0005634">
    <property type="term" value="C:nucleus"/>
    <property type="evidence" value="ECO:0007669"/>
    <property type="project" value="UniProtKB-SubCell"/>
</dbReference>
<dbReference type="GO" id="GO:0160205">
    <property type="term" value="F:cysteine-dependent adenosine diphosphate thiazole synthase activity"/>
    <property type="evidence" value="ECO:0007669"/>
    <property type="project" value="UniProtKB-EC"/>
</dbReference>
<dbReference type="GO" id="GO:0005506">
    <property type="term" value="F:iron ion binding"/>
    <property type="evidence" value="ECO:0007669"/>
    <property type="project" value="UniProtKB-UniRule"/>
</dbReference>
<dbReference type="GO" id="GO:0009228">
    <property type="term" value="P:thiamine biosynthetic process"/>
    <property type="evidence" value="ECO:0007669"/>
    <property type="project" value="UniProtKB-UniRule"/>
</dbReference>
<dbReference type="GO" id="GO:0052837">
    <property type="term" value="P:thiazole biosynthetic process"/>
    <property type="evidence" value="ECO:0007669"/>
    <property type="project" value="UniProtKB-UniRule"/>
</dbReference>
<dbReference type="Gene3D" id="6.10.250.2840">
    <property type="match status" value="1"/>
</dbReference>
<dbReference type="Gene3D" id="3.50.50.60">
    <property type="entry name" value="FAD/NAD(P)-binding domain"/>
    <property type="match status" value="1"/>
</dbReference>
<dbReference type="HAMAP" id="MF_03158">
    <property type="entry name" value="THI4"/>
    <property type="match status" value="1"/>
</dbReference>
<dbReference type="InterPro" id="IPR036188">
    <property type="entry name" value="FAD/NAD-bd_sf"/>
</dbReference>
<dbReference type="InterPro" id="IPR027495">
    <property type="entry name" value="Sti35"/>
</dbReference>
<dbReference type="InterPro" id="IPR002922">
    <property type="entry name" value="Thi4_fam"/>
</dbReference>
<dbReference type="NCBIfam" id="TIGR00292">
    <property type="entry name" value="sulfide-dependent adenosine diphosphate thiazole synthase"/>
    <property type="match status" value="1"/>
</dbReference>
<dbReference type="PANTHER" id="PTHR43422">
    <property type="entry name" value="THIAMINE THIAZOLE SYNTHASE"/>
    <property type="match status" value="1"/>
</dbReference>
<dbReference type="PANTHER" id="PTHR43422:SF3">
    <property type="entry name" value="THIAMINE THIAZOLE SYNTHASE"/>
    <property type="match status" value="1"/>
</dbReference>
<dbReference type="Pfam" id="PF01946">
    <property type="entry name" value="Thi4"/>
    <property type="match status" value="2"/>
</dbReference>
<dbReference type="SUPFAM" id="SSF51905">
    <property type="entry name" value="FAD/NAD(P)-binding domain"/>
    <property type="match status" value="1"/>
</dbReference>
<protein>
    <recommendedName>
        <fullName evidence="1">Thiamine thiazole synthase</fullName>
        <ecNumber evidence="1">2.4.2.60</ecNumber>
    </recommendedName>
    <alternativeName>
        <fullName evidence="1">Thiazole biosynthetic enzyme</fullName>
    </alternativeName>
</protein>
<proteinExistence type="inferred from homology"/>
<name>THI4_CANAW</name>
<keyword id="KW-0963">Cytoplasm</keyword>
<keyword id="KW-0408">Iron</keyword>
<keyword id="KW-0479">Metal-binding</keyword>
<keyword id="KW-0520">NAD</keyword>
<keyword id="KW-0539">Nucleus</keyword>
<keyword id="KW-0784">Thiamine biosynthesis</keyword>
<keyword id="KW-0808">Transferase</keyword>
<organism>
    <name type="scientific">Candida albicans (strain WO-1)</name>
    <name type="common">Yeast</name>
    <dbReference type="NCBI Taxonomy" id="294748"/>
    <lineage>
        <taxon>Eukaryota</taxon>
        <taxon>Fungi</taxon>
        <taxon>Dikarya</taxon>
        <taxon>Ascomycota</taxon>
        <taxon>Saccharomycotina</taxon>
        <taxon>Pichiomycetes</taxon>
        <taxon>Debaryomycetaceae</taxon>
        <taxon>Candida/Lodderomyces clade</taxon>
        <taxon>Candida</taxon>
    </lineage>
</organism>
<reference key="1">
    <citation type="journal article" date="2009" name="Nature">
        <title>Evolution of pathogenicity and sexual reproduction in eight Candida genomes.</title>
        <authorList>
            <person name="Butler G."/>
            <person name="Rasmussen M.D."/>
            <person name="Lin M.F."/>
            <person name="Santos M.A.S."/>
            <person name="Sakthikumar S."/>
            <person name="Munro C.A."/>
            <person name="Rheinbay E."/>
            <person name="Grabherr M."/>
            <person name="Forche A."/>
            <person name="Reedy J.L."/>
            <person name="Agrafioti I."/>
            <person name="Arnaud M.B."/>
            <person name="Bates S."/>
            <person name="Brown A.J.P."/>
            <person name="Brunke S."/>
            <person name="Costanzo M.C."/>
            <person name="Fitzpatrick D.A."/>
            <person name="de Groot P.W.J."/>
            <person name="Harris D."/>
            <person name="Hoyer L.L."/>
            <person name="Hube B."/>
            <person name="Klis F.M."/>
            <person name="Kodira C."/>
            <person name="Lennard N."/>
            <person name="Logue M.E."/>
            <person name="Martin R."/>
            <person name="Neiman A.M."/>
            <person name="Nikolaou E."/>
            <person name="Quail M.A."/>
            <person name="Quinn J."/>
            <person name="Santos M.C."/>
            <person name="Schmitzberger F.F."/>
            <person name="Sherlock G."/>
            <person name="Shah P."/>
            <person name="Silverstein K.A.T."/>
            <person name="Skrzypek M.S."/>
            <person name="Soll D."/>
            <person name="Staggs R."/>
            <person name="Stansfield I."/>
            <person name="Stumpf M.P.H."/>
            <person name="Sudbery P.E."/>
            <person name="Srikantha T."/>
            <person name="Zeng Q."/>
            <person name="Berman J."/>
            <person name="Berriman M."/>
            <person name="Heitman J."/>
            <person name="Gow N.A.R."/>
            <person name="Lorenz M.C."/>
            <person name="Birren B.W."/>
            <person name="Kellis M."/>
            <person name="Cuomo C.A."/>
        </authorList>
    </citation>
    <scope>NUCLEOTIDE SEQUENCE [LARGE SCALE GENOMIC DNA]</scope>
    <source>
        <strain>WO-1</strain>
    </source>
</reference>
<gene>
    <name evidence="1" type="primary">THI4</name>
    <name type="ORF">CAWG_02825</name>
</gene>